<comment type="alternative products">
    <event type="alternative splicing"/>
    <isoform>
        <id>P49691-1</id>
        <name>1</name>
        <sequence type="displayed"/>
    </isoform>
    <text>A number of isoforms are produced. According to EST sequences.</text>
</comment>
<comment type="similarity">
    <text evidence="3">Belongs to the universal ribosomal protein uL4 family.</text>
</comment>
<proteinExistence type="evidence at protein level"/>
<gene>
    <name type="primary">RPL4D</name>
    <name type="synonym">RPL1</name>
    <name type="synonym">RPL4</name>
    <name type="ordered locus">At5g02870</name>
    <name type="ORF">F9G14_180</name>
</gene>
<name>RL4B_ARATH</name>
<keyword id="KW-0025">Alternative splicing</keyword>
<keyword id="KW-1185">Reference proteome</keyword>
<keyword id="KW-0687">Ribonucleoprotein</keyword>
<keyword id="KW-0689">Ribosomal protein</keyword>
<organism>
    <name type="scientific">Arabidopsis thaliana</name>
    <name type="common">Mouse-ear cress</name>
    <dbReference type="NCBI Taxonomy" id="3702"/>
    <lineage>
        <taxon>Eukaryota</taxon>
        <taxon>Viridiplantae</taxon>
        <taxon>Streptophyta</taxon>
        <taxon>Embryophyta</taxon>
        <taxon>Tracheophyta</taxon>
        <taxon>Spermatophyta</taxon>
        <taxon>Magnoliopsida</taxon>
        <taxon>eudicotyledons</taxon>
        <taxon>Gunneridae</taxon>
        <taxon>Pentapetalae</taxon>
        <taxon>rosids</taxon>
        <taxon>malvids</taxon>
        <taxon>Brassicales</taxon>
        <taxon>Brassicaceae</taxon>
        <taxon>Camelineae</taxon>
        <taxon>Arabidopsis</taxon>
    </lineage>
</organism>
<feature type="chain" id="PRO_0000129362" description="Large ribosomal subunit protein uL4y">
    <location>
        <begin position="1"/>
        <end position="407"/>
    </location>
</feature>
<feature type="region of interest" description="Disordered" evidence="1">
    <location>
        <begin position="57"/>
        <end position="96"/>
    </location>
</feature>
<feature type="sequence conflict" description="In Ref. 4; CAA79191." evidence="3" ref="4">
    <original>G</original>
    <variation>V</variation>
    <location>
        <position position="181"/>
    </location>
</feature>
<feature type="sequence conflict" description="In Ref. 4; CAA79004." evidence="3" ref="4">
    <original>E</original>
    <variation>D</variation>
    <location>
        <position position="362"/>
    </location>
</feature>
<dbReference type="EMBL" id="AL162973">
    <property type="protein sequence ID" value="CAB86041.1"/>
    <property type="molecule type" value="Genomic_DNA"/>
</dbReference>
<dbReference type="EMBL" id="CP002688">
    <property type="protein sequence ID" value="AED90529.1"/>
    <property type="molecule type" value="Genomic_DNA"/>
</dbReference>
<dbReference type="EMBL" id="AY054479">
    <property type="protein sequence ID" value="AAK96670.1"/>
    <property type="molecule type" value="mRNA"/>
</dbReference>
<dbReference type="EMBL" id="AY059886">
    <property type="protein sequence ID" value="AAL24368.1"/>
    <property type="molecule type" value="mRNA"/>
</dbReference>
<dbReference type="EMBL" id="AY062452">
    <property type="protein sequence ID" value="AAL32530.1"/>
    <property type="molecule type" value="mRNA"/>
</dbReference>
<dbReference type="EMBL" id="AY093384">
    <property type="protein sequence ID" value="AAM13383.1"/>
    <property type="molecule type" value="mRNA"/>
</dbReference>
<dbReference type="EMBL" id="AY114639">
    <property type="protein sequence ID" value="AAM47958.1"/>
    <property type="molecule type" value="mRNA"/>
</dbReference>
<dbReference type="EMBL" id="AY136320">
    <property type="protein sequence ID" value="AAM96986.1"/>
    <property type="molecule type" value="mRNA"/>
</dbReference>
<dbReference type="EMBL" id="BT002088">
    <property type="protein sequence ID" value="AAN72099.1"/>
    <property type="molecule type" value="mRNA"/>
</dbReference>
<dbReference type="EMBL" id="Z18118">
    <property type="protein sequence ID" value="CAA79104.1"/>
    <property type="molecule type" value="mRNA"/>
</dbReference>
<dbReference type="EMBL" id="Z18460">
    <property type="protein sequence ID" value="CAA79191.1"/>
    <property type="molecule type" value="mRNA"/>
</dbReference>
<dbReference type="EMBL" id="Z17589">
    <property type="protein sequence ID" value="CAA79004.1"/>
    <property type="molecule type" value="mRNA"/>
</dbReference>
<dbReference type="PIR" id="T48308">
    <property type="entry name" value="T48308"/>
</dbReference>
<dbReference type="RefSeq" id="NP_195907.1">
    <molecule id="P49691-1"/>
    <property type="nucleotide sequence ID" value="NM_120365.4"/>
</dbReference>
<dbReference type="SMR" id="P49691"/>
<dbReference type="BioGRID" id="17032">
    <property type="interactions" value="179"/>
</dbReference>
<dbReference type="FunCoup" id="P49691">
    <property type="interactions" value="3523"/>
</dbReference>
<dbReference type="IntAct" id="P49691">
    <property type="interactions" value="10"/>
</dbReference>
<dbReference type="STRING" id="3702.P49691"/>
<dbReference type="iPTMnet" id="P49691"/>
<dbReference type="PaxDb" id="3702-AT5G02870.1"/>
<dbReference type="ProteomicsDB" id="226837">
    <molecule id="P49691-1"/>
</dbReference>
<dbReference type="EnsemblPlants" id="AT5G02870.1">
    <molecule id="P49691-1"/>
    <property type="protein sequence ID" value="AT5G02870.1"/>
    <property type="gene ID" value="AT5G02870"/>
</dbReference>
<dbReference type="GeneID" id="831756"/>
<dbReference type="Gramene" id="AT5G02870.1">
    <molecule id="P49691-1"/>
    <property type="protein sequence ID" value="AT5G02870.1"/>
    <property type="gene ID" value="AT5G02870"/>
</dbReference>
<dbReference type="KEGG" id="ath:AT5G02870"/>
<dbReference type="Araport" id="AT5G02870"/>
<dbReference type="TAIR" id="AT5G02870">
    <property type="gene designation" value="RPL4"/>
</dbReference>
<dbReference type="eggNOG" id="KOG1475">
    <property type="taxonomic scope" value="Eukaryota"/>
</dbReference>
<dbReference type="HOGENOM" id="CLU_026535_3_0_1"/>
<dbReference type="InParanoid" id="P49691"/>
<dbReference type="PhylomeDB" id="P49691"/>
<dbReference type="CD-CODE" id="4299E36E">
    <property type="entry name" value="Nucleolus"/>
</dbReference>
<dbReference type="PRO" id="PR:P49691"/>
<dbReference type="Proteomes" id="UP000006548">
    <property type="component" value="Chromosome 5"/>
</dbReference>
<dbReference type="ExpressionAtlas" id="P49691">
    <property type="expression patterns" value="baseline and differential"/>
</dbReference>
<dbReference type="GO" id="GO:0022625">
    <property type="term" value="C:cytosolic large ribosomal subunit"/>
    <property type="evidence" value="ECO:0007005"/>
    <property type="project" value="TAIR"/>
</dbReference>
<dbReference type="GO" id="GO:0022626">
    <property type="term" value="C:cytosolic ribosome"/>
    <property type="evidence" value="ECO:0007005"/>
    <property type="project" value="TAIR"/>
</dbReference>
<dbReference type="GO" id="GO:0005730">
    <property type="term" value="C:nucleolus"/>
    <property type="evidence" value="ECO:0007005"/>
    <property type="project" value="TAIR"/>
</dbReference>
<dbReference type="GO" id="GO:0000325">
    <property type="term" value="C:plant-type vacuole"/>
    <property type="evidence" value="ECO:0007005"/>
    <property type="project" value="TAIR"/>
</dbReference>
<dbReference type="GO" id="GO:0005886">
    <property type="term" value="C:plasma membrane"/>
    <property type="evidence" value="ECO:0007005"/>
    <property type="project" value="TAIR"/>
</dbReference>
<dbReference type="GO" id="GO:0009506">
    <property type="term" value="C:plasmodesma"/>
    <property type="evidence" value="ECO:0007005"/>
    <property type="project" value="TAIR"/>
</dbReference>
<dbReference type="GO" id="GO:0005773">
    <property type="term" value="C:vacuole"/>
    <property type="evidence" value="ECO:0007005"/>
    <property type="project" value="TAIR"/>
</dbReference>
<dbReference type="GO" id="GO:0003729">
    <property type="term" value="F:mRNA binding"/>
    <property type="evidence" value="ECO:0000314"/>
    <property type="project" value="TAIR"/>
</dbReference>
<dbReference type="GO" id="GO:0003735">
    <property type="term" value="F:structural constituent of ribosome"/>
    <property type="evidence" value="ECO:0000314"/>
    <property type="project" value="CAFA"/>
</dbReference>
<dbReference type="GO" id="GO:0006412">
    <property type="term" value="P:translation"/>
    <property type="evidence" value="ECO:0007669"/>
    <property type="project" value="InterPro"/>
</dbReference>
<dbReference type="FunFam" id="3.40.1370.10:FF:000002">
    <property type="entry name" value="60S ribosomal protein L4"/>
    <property type="match status" value="1"/>
</dbReference>
<dbReference type="Gene3D" id="3.40.1370.10">
    <property type="match status" value="1"/>
</dbReference>
<dbReference type="InterPro" id="IPR025755">
    <property type="entry name" value="Ribos_uL4_C_dom"/>
</dbReference>
<dbReference type="InterPro" id="IPR002136">
    <property type="entry name" value="Ribosomal_uL4"/>
</dbReference>
<dbReference type="InterPro" id="IPR023574">
    <property type="entry name" value="Ribosomal_uL4_dom_sf"/>
</dbReference>
<dbReference type="InterPro" id="IPR013000">
    <property type="entry name" value="Ribosomal_uL4_euk/arc_CS"/>
</dbReference>
<dbReference type="InterPro" id="IPR045240">
    <property type="entry name" value="Ribosomal_uL4_euk/arch"/>
</dbReference>
<dbReference type="PANTHER" id="PTHR19431">
    <property type="entry name" value="60S RIBOSOMAL PROTEIN L4"/>
    <property type="match status" value="1"/>
</dbReference>
<dbReference type="Pfam" id="PF14374">
    <property type="entry name" value="Ribos_L4_asso_C"/>
    <property type="match status" value="1"/>
</dbReference>
<dbReference type="Pfam" id="PF00573">
    <property type="entry name" value="Ribosomal_L4"/>
    <property type="match status" value="1"/>
</dbReference>
<dbReference type="SUPFAM" id="SSF52166">
    <property type="entry name" value="Ribosomal protein L4"/>
    <property type="match status" value="1"/>
</dbReference>
<dbReference type="PROSITE" id="PS00939">
    <property type="entry name" value="RIBOSOMAL_L1E"/>
    <property type="match status" value="1"/>
</dbReference>
<accession>P49691</accession>
<accession>Q9LYZ8</accession>
<protein>
    <recommendedName>
        <fullName evidence="2">Large ribosomal subunit protein uL4y</fullName>
    </recommendedName>
    <alternativeName>
        <fullName>60S ribosomal protein L4-2</fullName>
    </alternativeName>
    <alternativeName>
        <fullName>L1</fullName>
    </alternativeName>
</protein>
<evidence type="ECO:0000256" key="1">
    <source>
        <dbReference type="SAM" id="MobiDB-lite"/>
    </source>
</evidence>
<evidence type="ECO:0000303" key="2">
    <source>
    </source>
</evidence>
<evidence type="ECO:0000305" key="3"/>
<sequence>MVASAAARPLVTVQGLDGDMSTDQSTTVTLPDVMTAPVRPDIVNFVHAQISNNSRQPYAVSKKAGHQTSAESWGTGRAVSRIPRVPGGGTHRAGQAAFGNMCRGGRMFAPTKIWRRWHRRVNVNMKRHAIVSAIAATAVPALVMARGHKIENVPEMPLVVSDSAEAVEKTSAAIKVLKQIGAYDDAEKAKNSIGIRPGKGKMRNRRYISRKGPLVVFGTEGAKIVKAFRNLPGVELCHVERLNLLKLAPGGHLGRFVIWTKSAFEKLESIYGSFEKPSEKKKGYVLPRAKMVNADLARIINSDEVQSVVNPIKDGSKRAVLKKNPLKNLNVMFKLNPYAKTAKRMSLLAEASRVKAKKEKLEKKRKVVTKEEAQAIKAAGKAWYQTMISDSDYTEFDNFTKWLGASQ</sequence>
<reference key="1">
    <citation type="journal article" date="2000" name="Nature">
        <title>Sequence and analysis of chromosome 5 of the plant Arabidopsis thaliana.</title>
        <authorList>
            <person name="Tabata S."/>
            <person name="Kaneko T."/>
            <person name="Nakamura Y."/>
            <person name="Kotani H."/>
            <person name="Kato T."/>
            <person name="Asamizu E."/>
            <person name="Miyajima N."/>
            <person name="Sasamoto S."/>
            <person name="Kimura T."/>
            <person name="Hosouchi T."/>
            <person name="Kawashima K."/>
            <person name="Kohara M."/>
            <person name="Matsumoto M."/>
            <person name="Matsuno A."/>
            <person name="Muraki A."/>
            <person name="Nakayama S."/>
            <person name="Nakazaki N."/>
            <person name="Naruo K."/>
            <person name="Okumura S."/>
            <person name="Shinpo S."/>
            <person name="Takeuchi C."/>
            <person name="Wada T."/>
            <person name="Watanabe A."/>
            <person name="Yamada M."/>
            <person name="Yasuda M."/>
            <person name="Sato S."/>
            <person name="de la Bastide M."/>
            <person name="Huang E."/>
            <person name="Spiegel L."/>
            <person name="Gnoj L."/>
            <person name="O'Shaughnessy A."/>
            <person name="Preston R."/>
            <person name="Habermann K."/>
            <person name="Murray J."/>
            <person name="Johnson D."/>
            <person name="Rohlfing T."/>
            <person name="Nelson J."/>
            <person name="Stoneking T."/>
            <person name="Pepin K."/>
            <person name="Spieth J."/>
            <person name="Sekhon M."/>
            <person name="Armstrong J."/>
            <person name="Becker M."/>
            <person name="Belter E."/>
            <person name="Cordum H."/>
            <person name="Cordes M."/>
            <person name="Courtney L."/>
            <person name="Courtney W."/>
            <person name="Dante M."/>
            <person name="Du H."/>
            <person name="Edwards J."/>
            <person name="Fryman J."/>
            <person name="Haakensen B."/>
            <person name="Lamar E."/>
            <person name="Latreille P."/>
            <person name="Leonard S."/>
            <person name="Meyer R."/>
            <person name="Mulvaney E."/>
            <person name="Ozersky P."/>
            <person name="Riley A."/>
            <person name="Strowmatt C."/>
            <person name="Wagner-McPherson C."/>
            <person name="Wollam A."/>
            <person name="Yoakum M."/>
            <person name="Bell M."/>
            <person name="Dedhia N."/>
            <person name="Parnell L."/>
            <person name="Shah R."/>
            <person name="Rodriguez M."/>
            <person name="Hoon See L."/>
            <person name="Vil D."/>
            <person name="Baker J."/>
            <person name="Kirchoff K."/>
            <person name="Toth K."/>
            <person name="King L."/>
            <person name="Bahret A."/>
            <person name="Miller B."/>
            <person name="Marra M.A."/>
            <person name="Martienssen R."/>
            <person name="McCombie W.R."/>
            <person name="Wilson R.K."/>
            <person name="Murphy G."/>
            <person name="Bancroft I."/>
            <person name="Volckaert G."/>
            <person name="Wambutt R."/>
            <person name="Duesterhoeft A."/>
            <person name="Stiekema W."/>
            <person name="Pohl T."/>
            <person name="Entian K.-D."/>
            <person name="Terryn N."/>
            <person name="Hartley N."/>
            <person name="Bent E."/>
            <person name="Johnson S."/>
            <person name="Langham S.-A."/>
            <person name="McCullagh B."/>
            <person name="Robben J."/>
            <person name="Grymonprez B."/>
            <person name="Zimmermann W."/>
            <person name="Ramsperger U."/>
            <person name="Wedler H."/>
            <person name="Balke K."/>
            <person name="Wedler E."/>
            <person name="Peters S."/>
            <person name="van Staveren M."/>
            <person name="Dirkse W."/>
            <person name="Mooijman P."/>
            <person name="Klein Lankhorst R."/>
            <person name="Weitzenegger T."/>
            <person name="Bothe G."/>
            <person name="Rose M."/>
            <person name="Hauf J."/>
            <person name="Berneiser S."/>
            <person name="Hempel S."/>
            <person name="Feldpausch M."/>
            <person name="Lamberth S."/>
            <person name="Villarroel R."/>
            <person name="Gielen J."/>
            <person name="Ardiles W."/>
            <person name="Bents O."/>
            <person name="Lemcke K."/>
            <person name="Kolesov G."/>
            <person name="Mayer K.F.X."/>
            <person name="Rudd S."/>
            <person name="Schoof H."/>
            <person name="Schueller C."/>
            <person name="Zaccaria P."/>
            <person name="Mewes H.-W."/>
            <person name="Bevan M."/>
            <person name="Fransz P.F."/>
        </authorList>
    </citation>
    <scope>NUCLEOTIDE SEQUENCE [LARGE SCALE GENOMIC DNA]</scope>
    <source>
        <strain>cv. Columbia</strain>
    </source>
</reference>
<reference key="2">
    <citation type="journal article" date="2017" name="Plant J.">
        <title>Araport11: a complete reannotation of the Arabidopsis thaliana reference genome.</title>
        <authorList>
            <person name="Cheng C.Y."/>
            <person name="Krishnakumar V."/>
            <person name="Chan A.P."/>
            <person name="Thibaud-Nissen F."/>
            <person name="Schobel S."/>
            <person name="Town C.D."/>
        </authorList>
    </citation>
    <scope>GENOME REANNOTATION</scope>
    <source>
        <strain>cv. Columbia</strain>
    </source>
</reference>
<reference key="3">
    <citation type="journal article" date="2003" name="Science">
        <title>Empirical analysis of transcriptional activity in the Arabidopsis genome.</title>
        <authorList>
            <person name="Yamada K."/>
            <person name="Lim J."/>
            <person name="Dale J.M."/>
            <person name="Chen H."/>
            <person name="Shinn P."/>
            <person name="Palm C.J."/>
            <person name="Southwick A.M."/>
            <person name="Wu H.C."/>
            <person name="Kim C.J."/>
            <person name="Nguyen M."/>
            <person name="Pham P.K."/>
            <person name="Cheuk R.F."/>
            <person name="Karlin-Newmann G."/>
            <person name="Liu S.X."/>
            <person name="Lam B."/>
            <person name="Sakano H."/>
            <person name="Wu T."/>
            <person name="Yu G."/>
            <person name="Miranda M."/>
            <person name="Quach H.L."/>
            <person name="Tripp M."/>
            <person name="Chang C.H."/>
            <person name="Lee J.M."/>
            <person name="Toriumi M.J."/>
            <person name="Chan M.M."/>
            <person name="Tang C.C."/>
            <person name="Onodera C.S."/>
            <person name="Deng J.M."/>
            <person name="Akiyama K."/>
            <person name="Ansari Y."/>
            <person name="Arakawa T."/>
            <person name="Banh J."/>
            <person name="Banno F."/>
            <person name="Bowser L."/>
            <person name="Brooks S.Y."/>
            <person name="Carninci P."/>
            <person name="Chao Q."/>
            <person name="Choy N."/>
            <person name="Enju A."/>
            <person name="Goldsmith A.D."/>
            <person name="Gurjal M."/>
            <person name="Hansen N.F."/>
            <person name="Hayashizaki Y."/>
            <person name="Johnson-Hopson C."/>
            <person name="Hsuan V.W."/>
            <person name="Iida K."/>
            <person name="Karnes M."/>
            <person name="Khan S."/>
            <person name="Koesema E."/>
            <person name="Ishida J."/>
            <person name="Jiang P.X."/>
            <person name="Jones T."/>
            <person name="Kawai J."/>
            <person name="Kamiya A."/>
            <person name="Meyers C."/>
            <person name="Nakajima M."/>
            <person name="Narusaka M."/>
            <person name="Seki M."/>
            <person name="Sakurai T."/>
            <person name="Satou M."/>
            <person name="Tamse R."/>
            <person name="Vaysberg M."/>
            <person name="Wallender E.K."/>
            <person name="Wong C."/>
            <person name="Yamamura Y."/>
            <person name="Yuan S."/>
            <person name="Shinozaki K."/>
            <person name="Davis R.W."/>
            <person name="Theologis A."/>
            <person name="Ecker J.R."/>
        </authorList>
    </citation>
    <scope>NUCLEOTIDE SEQUENCE [LARGE SCALE MRNA]</scope>
    <source>
        <strain>cv. Columbia</strain>
    </source>
</reference>
<reference key="4">
    <citation type="journal article" date="1993" name="Plant J.">
        <title>An inventory of 1152 expressed sequence tags obtained by partial sequencing of cDNAs from Arabidopsis thaliana.</title>
        <authorList>
            <person name="Hoefte H."/>
            <person name="Desprez T."/>
            <person name="Amselem J."/>
            <person name="Chiapello H."/>
            <person name="Rouze P."/>
            <person name="Caboche M."/>
            <person name="Moisan A."/>
            <person name="Jourjon M.-F."/>
            <person name="Charpenteau J.-L."/>
            <person name="Berthomieu P."/>
            <person name="Guerrier D."/>
            <person name="Giraudat J."/>
            <person name="Quigley F."/>
            <person name="Thomas F."/>
            <person name="Yu D.-Y."/>
            <person name="Mache R."/>
            <person name="Raynal M."/>
            <person name="Cooke R."/>
            <person name="Grellet F."/>
            <person name="Delseny M."/>
            <person name="Parmentier Y."/>
            <person name="de Marcillac G."/>
            <person name="Gigot C."/>
            <person name="Fleck J."/>
            <person name="Philipps G."/>
            <person name="Axelos M."/>
            <person name="Bardet C."/>
            <person name="Tremousaygue D."/>
            <person name="Lescure B."/>
        </authorList>
    </citation>
    <scope>NUCLEOTIDE SEQUENCE [LARGE SCALE MRNA]</scope>
    <source>
        <strain>cv. Columbia</strain>
        <tissue>Green siliques</tissue>
        <tissue>Seedling</tissue>
    </source>
</reference>
<reference key="5">
    <citation type="journal article" date="2001" name="Plant Physiol.">
        <title>The organization of cytoplasmic ribosomal protein genes in the Arabidopsis genome.</title>
        <authorList>
            <person name="Barakat A."/>
            <person name="Szick-Miranda K."/>
            <person name="Chang I.-F."/>
            <person name="Guyot R."/>
            <person name="Blanc G."/>
            <person name="Cooke R."/>
            <person name="Delseny M."/>
            <person name="Bailey-Serres J."/>
        </authorList>
    </citation>
    <scope>GENE FAMILY ORGANIZATION</scope>
    <scope>NOMENCLATURE</scope>
</reference>
<reference key="6">
    <citation type="journal article" date="2007" name="Mol. Cell. Proteomics">
        <title>Multidimensional protein identification technology (MudPIT) analysis of ubiquitinated proteins in plants.</title>
        <authorList>
            <person name="Maor R."/>
            <person name="Jones A."/>
            <person name="Nuehse T.S."/>
            <person name="Studholme D.J."/>
            <person name="Peck S.C."/>
            <person name="Shirasu K."/>
        </authorList>
    </citation>
    <scope>IDENTIFICATION BY MASS SPECTROMETRY [LARGE SCALE ANALYSIS]</scope>
    <source>
        <strain>cv. Landsberg erecta</strain>
    </source>
</reference>
<reference key="7">
    <citation type="journal article" date="2023" name="Plant Cell">
        <title>An updated nomenclature for plant ribosomal protein genes.</title>
        <authorList>
            <person name="Scarpin M.R."/>
            <person name="Busche M."/>
            <person name="Martinez R.E."/>
            <person name="Harper L.C."/>
            <person name="Reiser L."/>
            <person name="Szakonyi D."/>
            <person name="Merchante C."/>
            <person name="Lan T."/>
            <person name="Xiong W."/>
            <person name="Mo B."/>
            <person name="Tang G."/>
            <person name="Chen X."/>
            <person name="Bailey-Serres J."/>
            <person name="Browning K.S."/>
            <person name="Brunkard J.O."/>
        </authorList>
    </citation>
    <scope>NOMENCLATURE</scope>
</reference>